<accession>A2BYH6</accession>
<protein>
    <recommendedName>
        <fullName evidence="2">ATP synthase subunit alpha</fullName>
        <ecNumber evidence="2">7.1.2.2</ecNumber>
    </recommendedName>
    <alternativeName>
        <fullName evidence="2">ATP synthase F1 sector subunit alpha</fullName>
    </alternativeName>
    <alternativeName>
        <fullName evidence="2">F-ATPase subunit alpha</fullName>
    </alternativeName>
</protein>
<dbReference type="EC" id="7.1.2.2" evidence="2"/>
<dbReference type="EMBL" id="CP000552">
    <property type="protein sequence ID" value="ABM72837.1"/>
    <property type="molecule type" value="Genomic_DNA"/>
</dbReference>
<dbReference type="RefSeq" id="WP_011820932.1">
    <property type="nucleotide sequence ID" value="NC_008817.1"/>
</dbReference>
<dbReference type="SMR" id="A2BYH6"/>
<dbReference type="STRING" id="167542.P9515_16301"/>
<dbReference type="GeneID" id="60200788"/>
<dbReference type="KEGG" id="pmc:P9515_16301"/>
<dbReference type="eggNOG" id="COG0056">
    <property type="taxonomic scope" value="Bacteria"/>
</dbReference>
<dbReference type="HOGENOM" id="CLU_010091_2_1_3"/>
<dbReference type="OrthoDB" id="9803053at2"/>
<dbReference type="Proteomes" id="UP000001589">
    <property type="component" value="Chromosome"/>
</dbReference>
<dbReference type="GO" id="GO:0031676">
    <property type="term" value="C:plasma membrane-derived thylakoid membrane"/>
    <property type="evidence" value="ECO:0007669"/>
    <property type="project" value="UniProtKB-SubCell"/>
</dbReference>
<dbReference type="GO" id="GO:0045259">
    <property type="term" value="C:proton-transporting ATP synthase complex"/>
    <property type="evidence" value="ECO:0007669"/>
    <property type="project" value="UniProtKB-KW"/>
</dbReference>
<dbReference type="GO" id="GO:0043531">
    <property type="term" value="F:ADP binding"/>
    <property type="evidence" value="ECO:0007669"/>
    <property type="project" value="TreeGrafter"/>
</dbReference>
<dbReference type="GO" id="GO:0005524">
    <property type="term" value="F:ATP binding"/>
    <property type="evidence" value="ECO:0007669"/>
    <property type="project" value="UniProtKB-UniRule"/>
</dbReference>
<dbReference type="GO" id="GO:0046933">
    <property type="term" value="F:proton-transporting ATP synthase activity, rotational mechanism"/>
    <property type="evidence" value="ECO:0007669"/>
    <property type="project" value="UniProtKB-UniRule"/>
</dbReference>
<dbReference type="CDD" id="cd18113">
    <property type="entry name" value="ATP-synt_F1_alpha_C"/>
    <property type="match status" value="1"/>
</dbReference>
<dbReference type="CDD" id="cd18116">
    <property type="entry name" value="ATP-synt_F1_alpha_N"/>
    <property type="match status" value="1"/>
</dbReference>
<dbReference type="CDD" id="cd01132">
    <property type="entry name" value="F1-ATPase_alpha_CD"/>
    <property type="match status" value="1"/>
</dbReference>
<dbReference type="FunFam" id="1.20.150.20:FF:000001">
    <property type="entry name" value="ATP synthase subunit alpha"/>
    <property type="match status" value="1"/>
</dbReference>
<dbReference type="FunFam" id="2.40.30.20:FF:000001">
    <property type="entry name" value="ATP synthase subunit alpha"/>
    <property type="match status" value="1"/>
</dbReference>
<dbReference type="FunFam" id="3.40.50.300:FF:000002">
    <property type="entry name" value="ATP synthase subunit alpha"/>
    <property type="match status" value="1"/>
</dbReference>
<dbReference type="Gene3D" id="2.40.30.20">
    <property type="match status" value="1"/>
</dbReference>
<dbReference type="Gene3D" id="1.20.150.20">
    <property type="entry name" value="ATP synthase alpha/beta chain, C-terminal domain"/>
    <property type="match status" value="1"/>
</dbReference>
<dbReference type="Gene3D" id="3.40.50.300">
    <property type="entry name" value="P-loop containing nucleotide triphosphate hydrolases"/>
    <property type="match status" value="1"/>
</dbReference>
<dbReference type="HAMAP" id="MF_01346">
    <property type="entry name" value="ATP_synth_alpha_bact"/>
    <property type="match status" value="1"/>
</dbReference>
<dbReference type="InterPro" id="IPR023366">
    <property type="entry name" value="ATP_synth_asu-like_sf"/>
</dbReference>
<dbReference type="InterPro" id="IPR000793">
    <property type="entry name" value="ATP_synth_asu_C"/>
</dbReference>
<dbReference type="InterPro" id="IPR038376">
    <property type="entry name" value="ATP_synth_asu_C_sf"/>
</dbReference>
<dbReference type="InterPro" id="IPR033732">
    <property type="entry name" value="ATP_synth_F1_a_nt-bd_dom"/>
</dbReference>
<dbReference type="InterPro" id="IPR005294">
    <property type="entry name" value="ATP_synth_F1_asu"/>
</dbReference>
<dbReference type="InterPro" id="IPR020003">
    <property type="entry name" value="ATPase_a/bsu_AS"/>
</dbReference>
<dbReference type="InterPro" id="IPR004100">
    <property type="entry name" value="ATPase_F1/V1/A1_a/bsu_N"/>
</dbReference>
<dbReference type="InterPro" id="IPR036121">
    <property type="entry name" value="ATPase_F1/V1/A1_a/bsu_N_sf"/>
</dbReference>
<dbReference type="InterPro" id="IPR000194">
    <property type="entry name" value="ATPase_F1/V1/A1_a/bsu_nucl-bd"/>
</dbReference>
<dbReference type="InterPro" id="IPR027417">
    <property type="entry name" value="P-loop_NTPase"/>
</dbReference>
<dbReference type="NCBIfam" id="TIGR00962">
    <property type="entry name" value="atpA"/>
    <property type="match status" value="1"/>
</dbReference>
<dbReference type="NCBIfam" id="NF009884">
    <property type="entry name" value="PRK13343.1"/>
    <property type="match status" value="1"/>
</dbReference>
<dbReference type="PANTHER" id="PTHR48082">
    <property type="entry name" value="ATP SYNTHASE SUBUNIT ALPHA, MITOCHONDRIAL"/>
    <property type="match status" value="1"/>
</dbReference>
<dbReference type="PANTHER" id="PTHR48082:SF2">
    <property type="entry name" value="ATP SYNTHASE SUBUNIT ALPHA, MITOCHONDRIAL"/>
    <property type="match status" value="1"/>
</dbReference>
<dbReference type="Pfam" id="PF00006">
    <property type="entry name" value="ATP-synt_ab"/>
    <property type="match status" value="1"/>
</dbReference>
<dbReference type="Pfam" id="PF00306">
    <property type="entry name" value="ATP-synt_ab_C"/>
    <property type="match status" value="1"/>
</dbReference>
<dbReference type="Pfam" id="PF02874">
    <property type="entry name" value="ATP-synt_ab_N"/>
    <property type="match status" value="1"/>
</dbReference>
<dbReference type="PIRSF" id="PIRSF039088">
    <property type="entry name" value="F_ATPase_subunit_alpha"/>
    <property type="match status" value="1"/>
</dbReference>
<dbReference type="SUPFAM" id="SSF47917">
    <property type="entry name" value="C-terminal domain of alpha and beta subunits of F1 ATP synthase"/>
    <property type="match status" value="1"/>
</dbReference>
<dbReference type="SUPFAM" id="SSF50615">
    <property type="entry name" value="N-terminal domain of alpha and beta subunits of F1 ATP synthase"/>
    <property type="match status" value="1"/>
</dbReference>
<dbReference type="SUPFAM" id="SSF52540">
    <property type="entry name" value="P-loop containing nucleoside triphosphate hydrolases"/>
    <property type="match status" value="1"/>
</dbReference>
<dbReference type="PROSITE" id="PS00152">
    <property type="entry name" value="ATPASE_ALPHA_BETA"/>
    <property type="match status" value="1"/>
</dbReference>
<comment type="function">
    <text evidence="2">Produces ATP from ADP in the presence of a proton gradient across the membrane. The alpha chain is a regulatory subunit.</text>
</comment>
<comment type="catalytic activity">
    <reaction evidence="2">
        <text>ATP + H2O + 4 H(+)(in) = ADP + phosphate + 5 H(+)(out)</text>
        <dbReference type="Rhea" id="RHEA:57720"/>
        <dbReference type="ChEBI" id="CHEBI:15377"/>
        <dbReference type="ChEBI" id="CHEBI:15378"/>
        <dbReference type="ChEBI" id="CHEBI:30616"/>
        <dbReference type="ChEBI" id="CHEBI:43474"/>
        <dbReference type="ChEBI" id="CHEBI:456216"/>
        <dbReference type="EC" id="7.1.2.2"/>
    </reaction>
</comment>
<comment type="subunit">
    <text evidence="1">F-type ATPases have 2 components, CF(1) - the catalytic core - and CF(0) - the membrane proton channel. CF(1) has five subunits: alpha(3), beta(3), gamma(1), delta(1), epsilon(1). CF(0) has four main subunits: a(1), b(1), b'(1) and c(9-12) (By similarity).</text>
</comment>
<comment type="subcellular location">
    <subcellularLocation>
        <location evidence="2">Cellular thylakoid membrane</location>
        <topology evidence="2">Peripheral membrane protein</topology>
    </subcellularLocation>
</comment>
<comment type="similarity">
    <text evidence="2">Belongs to the ATPase alpha/beta chains family.</text>
</comment>
<proteinExistence type="inferred from homology"/>
<keyword id="KW-0066">ATP synthesis</keyword>
<keyword id="KW-0067">ATP-binding</keyword>
<keyword id="KW-0139">CF(1)</keyword>
<keyword id="KW-0375">Hydrogen ion transport</keyword>
<keyword id="KW-0406">Ion transport</keyword>
<keyword id="KW-0472">Membrane</keyword>
<keyword id="KW-0547">Nucleotide-binding</keyword>
<keyword id="KW-0793">Thylakoid</keyword>
<keyword id="KW-1278">Translocase</keyword>
<keyword id="KW-0813">Transport</keyword>
<gene>
    <name evidence="2" type="primary">atpA</name>
    <name type="ordered locus">P9515_16301</name>
</gene>
<evidence type="ECO:0000250" key="1"/>
<evidence type="ECO:0000255" key="2">
    <source>
        <dbReference type="HAMAP-Rule" id="MF_01346"/>
    </source>
</evidence>
<feature type="chain" id="PRO_0000302687" description="ATP synthase subunit alpha">
    <location>
        <begin position="1"/>
        <end position="505"/>
    </location>
</feature>
<feature type="binding site" evidence="2">
    <location>
        <begin position="170"/>
        <end position="177"/>
    </location>
    <ligand>
        <name>ATP</name>
        <dbReference type="ChEBI" id="CHEBI:30616"/>
    </ligand>
</feature>
<feature type="site" description="Required for activity" evidence="2">
    <location>
        <position position="363"/>
    </location>
</feature>
<organism>
    <name type="scientific">Prochlorococcus marinus (strain MIT 9515)</name>
    <dbReference type="NCBI Taxonomy" id="167542"/>
    <lineage>
        <taxon>Bacteria</taxon>
        <taxon>Bacillati</taxon>
        <taxon>Cyanobacteriota</taxon>
        <taxon>Cyanophyceae</taxon>
        <taxon>Synechococcales</taxon>
        <taxon>Prochlorococcaceae</taxon>
        <taxon>Prochlorococcus</taxon>
    </lineage>
</organism>
<sequence>MVSIRPDEISSILKQQITDYDQSVSVSNVGTVLQIGDGIARIYGLDQVMAGELLEFEDGTEGIALNLEDDNVGAVLMGEALGVQEGSNVKSTGKIASVPVGEAMKGRVVNPLGQPIDGKGEIPTSDNRLIEEMAPGIIKRRSVHEPMQTGITSIDAMIPVGRGQRELIIGDRQTGKTAIAIDTIINQKGQDVVCVYVAIGQKSASVANVVEVLREKGALDYTVVVSAGASEAAALQYLAPYTGAAIAEHFMYQGKATLVIYDDLTKQAQAYRQMSLLLRRPPGREAYPGDVFYCHSRLLERAAKLSDDMGGGSMTALPIIETQAGDVSAYIPTNVISITDGQIFLSADLFNSGLRPAINVGISVSRVGGAAQTKAIKKIAGTLKLELAQFDELAAFSQFASDLDEATQQQLERGKRLRELLKQAQFSPLNLAEQVAVVYAGVKGLIDEVPVEDVTKFAAELREYLKLNKAEFIEEILKEKKLNEGLETTLTEVIKEVKSSMLATV</sequence>
<name>ATPA_PROM5</name>
<reference key="1">
    <citation type="journal article" date="2007" name="PLoS Genet.">
        <title>Patterns and implications of gene gain and loss in the evolution of Prochlorococcus.</title>
        <authorList>
            <person name="Kettler G.C."/>
            <person name="Martiny A.C."/>
            <person name="Huang K."/>
            <person name="Zucker J."/>
            <person name="Coleman M.L."/>
            <person name="Rodrigue S."/>
            <person name="Chen F."/>
            <person name="Lapidus A."/>
            <person name="Ferriera S."/>
            <person name="Johnson J."/>
            <person name="Steglich C."/>
            <person name="Church G.M."/>
            <person name="Richardson P."/>
            <person name="Chisholm S.W."/>
        </authorList>
    </citation>
    <scope>NUCLEOTIDE SEQUENCE [LARGE SCALE GENOMIC DNA]</scope>
    <source>
        <strain>MIT 9515</strain>
    </source>
</reference>